<accession>O59868</accession>
<gene>
    <name type="primary">pmr1</name>
    <name type="synonym">pgak2</name>
    <name type="ORF">SPBC31E1.02c</name>
</gene>
<name>ATC1_SCHPO</name>
<evidence type="ECO:0000250" key="1"/>
<evidence type="ECO:0000255" key="2"/>
<evidence type="ECO:0000269" key="3">
    <source>
    </source>
</evidence>
<evidence type="ECO:0000269" key="4">
    <source>
    </source>
</evidence>
<evidence type="ECO:0000269" key="5">
    <source>
    </source>
</evidence>
<evidence type="ECO:0000305" key="6"/>
<protein>
    <recommendedName>
        <fullName>Calcium-transporting ATPase 1</fullName>
        <ecNumber>7.2.2.10</ecNumber>
    </recommendedName>
    <alternativeName>
        <fullName>Golgi Ca(2+)-ATPase</fullName>
    </alternativeName>
</protein>
<reference key="1">
    <citation type="journal article" date="2004" name="Eukaryot. Cell">
        <title>Schizosaccharomyces pombe Pmr1p is essential for cell wall integrity and is required for polarized cell growth and cytokinesis.</title>
        <authorList>
            <person name="Cortes J.C.G."/>
            <person name="Katoh-Fukui R."/>
            <person name="Moto K."/>
            <person name="Ribas J.C."/>
            <person name="Ishiguro J."/>
        </authorList>
    </citation>
    <scope>NUCLEOTIDE SEQUENCE [GENOMIC DNA]</scope>
    <scope>FUNCTION</scope>
    <scope>SUBCELLULAR LOCATION</scope>
</reference>
<reference key="2">
    <citation type="submission" date="1998-05" db="EMBL/GenBank/DDBJ databases">
        <title>S. pombe genomic sequence PGAK, extension of cosmid 800, accession U41410.</title>
        <authorList>
            <person name="Kaplan N."/>
            <person name="Gnoj L."/>
            <person name="Lodhi M."/>
            <person name="Johnson A.F."/>
            <person name="Dedhia N."/>
            <person name="Parnell L.D."/>
            <person name="McCombie W.R."/>
        </authorList>
    </citation>
    <scope>NUCLEOTIDE SEQUENCE [GENOMIC DNA]</scope>
</reference>
<reference key="3">
    <citation type="journal article" date="2002" name="Nature">
        <title>The genome sequence of Schizosaccharomyces pombe.</title>
        <authorList>
            <person name="Wood V."/>
            <person name="Gwilliam R."/>
            <person name="Rajandream M.A."/>
            <person name="Lyne M.H."/>
            <person name="Lyne R."/>
            <person name="Stewart A."/>
            <person name="Sgouros J.G."/>
            <person name="Peat N."/>
            <person name="Hayles J."/>
            <person name="Baker S.G."/>
            <person name="Basham D."/>
            <person name="Bowman S."/>
            <person name="Brooks K."/>
            <person name="Brown D."/>
            <person name="Brown S."/>
            <person name="Chillingworth T."/>
            <person name="Churcher C.M."/>
            <person name="Collins M."/>
            <person name="Connor R."/>
            <person name="Cronin A."/>
            <person name="Davis P."/>
            <person name="Feltwell T."/>
            <person name="Fraser A."/>
            <person name="Gentles S."/>
            <person name="Goble A."/>
            <person name="Hamlin N."/>
            <person name="Harris D.E."/>
            <person name="Hidalgo J."/>
            <person name="Hodgson G."/>
            <person name="Holroyd S."/>
            <person name="Hornsby T."/>
            <person name="Howarth S."/>
            <person name="Huckle E.J."/>
            <person name="Hunt S."/>
            <person name="Jagels K."/>
            <person name="James K.D."/>
            <person name="Jones L."/>
            <person name="Jones M."/>
            <person name="Leather S."/>
            <person name="McDonald S."/>
            <person name="McLean J."/>
            <person name="Mooney P."/>
            <person name="Moule S."/>
            <person name="Mungall K.L."/>
            <person name="Murphy L.D."/>
            <person name="Niblett D."/>
            <person name="Odell C."/>
            <person name="Oliver K."/>
            <person name="O'Neil S."/>
            <person name="Pearson D."/>
            <person name="Quail M.A."/>
            <person name="Rabbinowitsch E."/>
            <person name="Rutherford K.M."/>
            <person name="Rutter S."/>
            <person name="Saunders D."/>
            <person name="Seeger K."/>
            <person name="Sharp S."/>
            <person name="Skelton J."/>
            <person name="Simmonds M.N."/>
            <person name="Squares R."/>
            <person name="Squares S."/>
            <person name="Stevens K."/>
            <person name="Taylor K."/>
            <person name="Taylor R.G."/>
            <person name="Tivey A."/>
            <person name="Walsh S.V."/>
            <person name="Warren T."/>
            <person name="Whitehead S."/>
            <person name="Woodward J.R."/>
            <person name="Volckaert G."/>
            <person name="Aert R."/>
            <person name="Robben J."/>
            <person name="Grymonprez B."/>
            <person name="Weltjens I."/>
            <person name="Vanstreels E."/>
            <person name="Rieger M."/>
            <person name="Schaefer M."/>
            <person name="Mueller-Auer S."/>
            <person name="Gabel C."/>
            <person name="Fuchs M."/>
            <person name="Duesterhoeft A."/>
            <person name="Fritzc C."/>
            <person name="Holzer E."/>
            <person name="Moestl D."/>
            <person name="Hilbert H."/>
            <person name="Borzym K."/>
            <person name="Langer I."/>
            <person name="Beck A."/>
            <person name="Lehrach H."/>
            <person name="Reinhardt R."/>
            <person name="Pohl T.M."/>
            <person name="Eger P."/>
            <person name="Zimmermann W."/>
            <person name="Wedler H."/>
            <person name="Wambutt R."/>
            <person name="Purnelle B."/>
            <person name="Goffeau A."/>
            <person name="Cadieu E."/>
            <person name="Dreano S."/>
            <person name="Gloux S."/>
            <person name="Lelaure V."/>
            <person name="Mottier S."/>
            <person name="Galibert F."/>
            <person name="Aves S.J."/>
            <person name="Xiang Z."/>
            <person name="Hunt C."/>
            <person name="Moore K."/>
            <person name="Hurst S.M."/>
            <person name="Lucas M."/>
            <person name="Rochet M."/>
            <person name="Gaillardin C."/>
            <person name="Tallada V.A."/>
            <person name="Garzon A."/>
            <person name="Thode G."/>
            <person name="Daga R.R."/>
            <person name="Cruzado L."/>
            <person name="Jimenez J."/>
            <person name="Sanchez M."/>
            <person name="del Rey F."/>
            <person name="Benito J."/>
            <person name="Dominguez A."/>
            <person name="Revuelta J.L."/>
            <person name="Moreno S."/>
            <person name="Armstrong J."/>
            <person name="Forsburg S.L."/>
            <person name="Cerutti L."/>
            <person name="Lowe T."/>
            <person name="McCombie W.R."/>
            <person name="Paulsen I."/>
            <person name="Potashkin J."/>
            <person name="Shpakovski G.V."/>
            <person name="Ussery D."/>
            <person name="Barrell B.G."/>
            <person name="Nurse P."/>
        </authorList>
    </citation>
    <scope>NUCLEOTIDE SEQUENCE [LARGE SCALE GENOMIC DNA]</scope>
    <source>
        <strain>972 / ATCC 24843</strain>
    </source>
</reference>
<reference key="4">
    <citation type="journal article" date="2004" name="Genes Cells">
        <title>Pmr1, a P-type ATPase, and Pdt1, an Nramp homologue, cooperatively regulate cell morphogenesis in fission yeast: the importance of Mn2+ homeostasis.</title>
        <authorList>
            <person name="Maeda T."/>
            <person name="Sugiura R."/>
            <person name="Kita A."/>
            <person name="Saito M."/>
            <person name="Deng L."/>
            <person name="He Y."/>
            <person name="Yabin L."/>
            <person name="Fujita Y."/>
            <person name="Takegawa K."/>
            <person name="Shuntoh H."/>
            <person name="Kuno T."/>
        </authorList>
    </citation>
    <scope>FUNCTION</scope>
</reference>
<reference key="5">
    <citation type="journal article" date="2008" name="J. Proteome Res.">
        <title>Phosphoproteome analysis of fission yeast.</title>
        <authorList>
            <person name="Wilson-Grady J.T."/>
            <person name="Villen J."/>
            <person name="Gygi S.P."/>
        </authorList>
    </citation>
    <scope>PHOSPHORYLATION [LARGE SCALE ANALYSIS] AT SER-892</scope>
    <scope>IDENTIFICATION BY MASS SPECTROMETRY</scope>
</reference>
<feature type="chain" id="PRO_0000046229" description="Calcium-transporting ATPase 1">
    <location>
        <begin position="1"/>
        <end position="899"/>
    </location>
</feature>
<feature type="transmembrane region" description="Helical" evidence="2">
    <location>
        <begin position="59"/>
        <end position="79"/>
    </location>
</feature>
<feature type="transmembrane region" description="Helical" evidence="2">
    <location>
        <begin position="80"/>
        <end position="100"/>
    </location>
</feature>
<feature type="transmembrane region" description="Helical" evidence="2">
    <location>
        <begin position="247"/>
        <end position="267"/>
    </location>
</feature>
<feature type="transmembrane region" description="Helical" evidence="2">
    <location>
        <begin position="282"/>
        <end position="302"/>
    </location>
</feature>
<feature type="transmembrane region" description="Helical" evidence="2">
    <location>
        <begin position="688"/>
        <end position="708"/>
    </location>
</feature>
<feature type="transmembrane region" description="Helical" evidence="2">
    <location>
        <begin position="757"/>
        <end position="777"/>
    </location>
</feature>
<feature type="transmembrane region" description="Helical" evidence="2">
    <location>
        <begin position="827"/>
        <end position="847"/>
    </location>
</feature>
<feature type="transmembrane region" description="Helical" evidence="2">
    <location>
        <begin position="854"/>
        <end position="874"/>
    </location>
</feature>
<feature type="active site" description="4-aspartylphosphate intermediate" evidence="1">
    <location>
        <position position="329"/>
    </location>
</feature>
<feature type="modified residue" description="Phosphoserine" evidence="5">
    <location>
        <position position="892"/>
    </location>
</feature>
<sequence length="899" mass="98359">MSVQYDAFSVEQTCADLETDMYNGLSSLQEITRRNKVHGDNDLKVEDEENMVVQFLKQFVKDPLILLLFASSAISVTLGNIDDAISIALAIVIVVTVGFVQEYRSEQSLKALNNLVPHYCNVIRSGKTEHIVASKLVPGDLVILQIGDRVPADLRIVEATELEIDESNLTGENSPRKKSSEAISSNISLTERNNIAFMGTLVRHGHGRGIVVATGSDTEFGRVFLTMQQTEKPKTPLQNSMDDLGKQLSLISLIGIAVIVLVGFFQGKNWLEMLTIGVSLAVAAIPEGLPIIVTVTLALGVLRMSKKRAIIRRLPSVETLGSVNVICSDKTGTLTMNHMTVTKIYTCGMLAAFSLPESEHIELSVRRTVGIEKALLAAALCNNSKVHNKADSILDTTCPWAGFPVDVALIECSERFGLKDPRETYSRISEVSFSSERKYMSVAVQYNSSKMNFMKGATEQVLSSCAYFSDQDGVQHELTAEMKENIQRNEFEMAASGLRIIAVASGINTNKLVFHGLFGINDPPRPQVRESVQYLMTGGVRVIMITGDSVVTAISIARSLGMAIPSNDEEAIRNYALTGAQLDDLDSSSLRDAVSRVVVFARTTPQHKMKIVEALQSLGDVVAMTGDGVNDAPALKLADIGIAMGRQGTDVAKEAADMILTDDSFATILSAVEEGKGIFNNIKNFITFQLSTSVAALSLIAISSVFGFQNPLNAMQILWINILMDGPPAQSLGVESVDEDVMMKPPRPRNAPIISVQLLQRVLLSAFIIVTVTIVVFRVQMQDGNVTARDTTMTFTCFVFFDMFNALACRSETKSVFKLGIFSNRMFNIAVGGSLIGQALVVYASPFQRIFQTEAIGLKDVLILLACTSSVLWVDEIRKWYRRRKGLVRTKSNYLLRNV</sequence>
<comment type="function">
    <text evidence="3 4">Transports calcium and manganese ions into the cell. Regulates cell morphogenesis through control of manganese and calcium homeostasis.</text>
</comment>
<comment type="catalytic activity">
    <reaction>
        <text>Ca(2+)(in) + ATP + H2O = Ca(2+)(out) + ADP + phosphate + H(+)</text>
        <dbReference type="Rhea" id="RHEA:18105"/>
        <dbReference type="ChEBI" id="CHEBI:15377"/>
        <dbReference type="ChEBI" id="CHEBI:15378"/>
        <dbReference type="ChEBI" id="CHEBI:29108"/>
        <dbReference type="ChEBI" id="CHEBI:30616"/>
        <dbReference type="ChEBI" id="CHEBI:43474"/>
        <dbReference type="ChEBI" id="CHEBI:456216"/>
        <dbReference type="EC" id="7.2.2.10"/>
    </reaction>
</comment>
<comment type="subcellular location">
    <subcellularLocation>
        <location evidence="4">Endoplasmic reticulum membrane</location>
        <topology evidence="4">Multi-pass membrane protein</topology>
    </subcellularLocation>
</comment>
<comment type="similarity">
    <text evidence="6">Belongs to the cation transport ATPase (P-type) (TC 3.A.3) family.</text>
</comment>
<dbReference type="EC" id="7.2.2.10"/>
<dbReference type="EMBL" id="AC004698">
    <property type="protein sequence ID" value="AAC16669.1"/>
    <property type="molecule type" value="Genomic_DNA"/>
</dbReference>
<dbReference type="EMBL" id="CU329671">
    <property type="protein sequence ID" value="CAB39136.1"/>
    <property type="molecule type" value="Genomic_DNA"/>
</dbReference>
<dbReference type="PIR" id="T40199">
    <property type="entry name" value="T40199"/>
</dbReference>
<dbReference type="RefSeq" id="NP_595098.1">
    <property type="nucleotide sequence ID" value="NM_001021005.2"/>
</dbReference>
<dbReference type="SMR" id="O59868"/>
<dbReference type="BioGRID" id="276912">
    <property type="interactions" value="47"/>
</dbReference>
<dbReference type="FunCoup" id="O59868">
    <property type="interactions" value="294"/>
</dbReference>
<dbReference type="STRING" id="284812.O59868"/>
<dbReference type="TCDB" id="3.A.3.2.34">
    <property type="family name" value="the p-type atpase (p-atpase) superfamily"/>
</dbReference>
<dbReference type="iPTMnet" id="O59868"/>
<dbReference type="PaxDb" id="4896-SPBC31E1.02c.1"/>
<dbReference type="EnsemblFungi" id="SPBC31E1.02c.1">
    <property type="protein sequence ID" value="SPBC31E1.02c.1:pep"/>
    <property type="gene ID" value="SPBC31E1.02c"/>
</dbReference>
<dbReference type="GeneID" id="2540383"/>
<dbReference type="KEGG" id="spo:2540383"/>
<dbReference type="PomBase" id="SPBC31E1.02c">
    <property type="gene designation" value="pmr1"/>
</dbReference>
<dbReference type="VEuPathDB" id="FungiDB:SPBC31E1.02c"/>
<dbReference type="eggNOG" id="KOG0202">
    <property type="taxonomic scope" value="Eukaryota"/>
</dbReference>
<dbReference type="HOGENOM" id="CLU_002360_3_1_1"/>
<dbReference type="InParanoid" id="O59868"/>
<dbReference type="OMA" id="KMHACET"/>
<dbReference type="PhylomeDB" id="O59868"/>
<dbReference type="Reactome" id="R-SPO-936837">
    <property type="pathway name" value="Ion transport by P-type ATPases"/>
</dbReference>
<dbReference type="PRO" id="PR:O59868"/>
<dbReference type="Proteomes" id="UP000002485">
    <property type="component" value="Chromosome II"/>
</dbReference>
<dbReference type="GO" id="GO:0005783">
    <property type="term" value="C:endoplasmic reticulum"/>
    <property type="evidence" value="ECO:0000314"/>
    <property type="project" value="PomBase"/>
</dbReference>
<dbReference type="GO" id="GO:0005789">
    <property type="term" value="C:endoplasmic reticulum membrane"/>
    <property type="evidence" value="ECO:0000314"/>
    <property type="project" value="PomBase"/>
</dbReference>
<dbReference type="GO" id="GO:0000139">
    <property type="term" value="C:Golgi membrane"/>
    <property type="evidence" value="ECO:0000318"/>
    <property type="project" value="GO_Central"/>
</dbReference>
<dbReference type="GO" id="GO:0005635">
    <property type="term" value="C:nuclear envelope"/>
    <property type="evidence" value="ECO:0000314"/>
    <property type="project" value="PomBase"/>
</dbReference>
<dbReference type="GO" id="GO:0005886">
    <property type="term" value="C:plasma membrane"/>
    <property type="evidence" value="ECO:0000314"/>
    <property type="project" value="PomBase"/>
</dbReference>
<dbReference type="GO" id="GO:0015410">
    <property type="term" value="F:ABC-type manganese transporter activity"/>
    <property type="evidence" value="ECO:0000304"/>
    <property type="project" value="PomBase"/>
</dbReference>
<dbReference type="GO" id="GO:0005524">
    <property type="term" value="F:ATP binding"/>
    <property type="evidence" value="ECO:0007669"/>
    <property type="project" value="UniProtKB-KW"/>
</dbReference>
<dbReference type="GO" id="GO:0016887">
    <property type="term" value="F:ATP hydrolysis activity"/>
    <property type="evidence" value="ECO:0007669"/>
    <property type="project" value="InterPro"/>
</dbReference>
<dbReference type="GO" id="GO:0005509">
    <property type="term" value="F:calcium ion binding"/>
    <property type="evidence" value="ECO:0000266"/>
    <property type="project" value="PomBase"/>
</dbReference>
<dbReference type="GO" id="GO:0005388">
    <property type="term" value="F:P-type calcium transporter activity"/>
    <property type="evidence" value="ECO:0000318"/>
    <property type="project" value="GO_Central"/>
</dbReference>
<dbReference type="GO" id="GO:0070588">
    <property type="term" value="P:calcium ion transmembrane transport"/>
    <property type="evidence" value="ECO:0000316"/>
    <property type="project" value="PomBase"/>
</dbReference>
<dbReference type="GO" id="GO:0006874">
    <property type="term" value="P:intracellular calcium ion homeostasis"/>
    <property type="evidence" value="ECO:0000318"/>
    <property type="project" value="GO_Central"/>
</dbReference>
<dbReference type="GO" id="GO:0071421">
    <property type="term" value="P:manganese ion transmembrane transport"/>
    <property type="evidence" value="ECO:0000315"/>
    <property type="project" value="PomBase"/>
</dbReference>
<dbReference type="GO" id="GO:0006828">
    <property type="term" value="P:manganese ion transport"/>
    <property type="evidence" value="ECO:0000318"/>
    <property type="project" value="GO_Central"/>
</dbReference>
<dbReference type="GO" id="GO:0061454">
    <property type="term" value="P:release of sequestered calcium ion into cytosol by Golgi"/>
    <property type="evidence" value="ECO:0000269"/>
    <property type="project" value="PomBase"/>
</dbReference>
<dbReference type="CDD" id="cd02085">
    <property type="entry name" value="P-type_ATPase_SPCA"/>
    <property type="match status" value="1"/>
</dbReference>
<dbReference type="FunFam" id="2.70.150.10:FF:000008">
    <property type="entry name" value="Calcium-transporting ATPase"/>
    <property type="match status" value="1"/>
</dbReference>
<dbReference type="FunFam" id="3.40.1110.10:FF:000186">
    <property type="entry name" value="Calcium-transporting ATPase 1"/>
    <property type="match status" value="1"/>
</dbReference>
<dbReference type="FunFam" id="3.40.50.1000:FF:000028">
    <property type="entry name" value="Calcium-transporting P-type ATPase, putative"/>
    <property type="match status" value="1"/>
</dbReference>
<dbReference type="FunFam" id="3.40.50.1000:FF:000001">
    <property type="entry name" value="Phospholipid-transporting ATPase IC"/>
    <property type="match status" value="1"/>
</dbReference>
<dbReference type="Gene3D" id="3.40.1110.10">
    <property type="entry name" value="Calcium-transporting ATPase, cytoplasmic domain N"/>
    <property type="match status" value="1"/>
</dbReference>
<dbReference type="Gene3D" id="2.70.150.10">
    <property type="entry name" value="Calcium-transporting ATPase, cytoplasmic transduction domain A"/>
    <property type="match status" value="1"/>
</dbReference>
<dbReference type="Gene3D" id="1.20.1110.10">
    <property type="entry name" value="Calcium-transporting ATPase, transmembrane domain"/>
    <property type="match status" value="1"/>
</dbReference>
<dbReference type="Gene3D" id="3.40.50.1000">
    <property type="entry name" value="HAD superfamily/HAD-like"/>
    <property type="match status" value="1"/>
</dbReference>
<dbReference type="InterPro" id="IPR006068">
    <property type="entry name" value="ATPase_P-typ_cation-transptr_C"/>
</dbReference>
<dbReference type="InterPro" id="IPR004014">
    <property type="entry name" value="ATPase_P-typ_cation-transptr_N"/>
</dbReference>
<dbReference type="InterPro" id="IPR023299">
    <property type="entry name" value="ATPase_P-typ_cyto_dom_N"/>
</dbReference>
<dbReference type="InterPro" id="IPR018303">
    <property type="entry name" value="ATPase_P-typ_P_site"/>
</dbReference>
<dbReference type="InterPro" id="IPR023298">
    <property type="entry name" value="ATPase_P-typ_TM_dom_sf"/>
</dbReference>
<dbReference type="InterPro" id="IPR008250">
    <property type="entry name" value="ATPase_P-typ_transduc_dom_A_sf"/>
</dbReference>
<dbReference type="InterPro" id="IPR036412">
    <property type="entry name" value="HAD-like_sf"/>
</dbReference>
<dbReference type="InterPro" id="IPR023214">
    <property type="entry name" value="HAD_sf"/>
</dbReference>
<dbReference type="InterPro" id="IPR006413">
    <property type="entry name" value="P-type_ATPase_IIA_PMR1"/>
</dbReference>
<dbReference type="InterPro" id="IPR001757">
    <property type="entry name" value="P_typ_ATPase"/>
</dbReference>
<dbReference type="InterPro" id="IPR044492">
    <property type="entry name" value="P_typ_ATPase_HD_dom"/>
</dbReference>
<dbReference type="NCBIfam" id="TIGR01522">
    <property type="entry name" value="ATPase-IIA2_Ca"/>
    <property type="match status" value="1"/>
</dbReference>
<dbReference type="NCBIfam" id="TIGR01494">
    <property type="entry name" value="ATPase_P-type"/>
    <property type="match status" value="3"/>
</dbReference>
<dbReference type="PANTHER" id="PTHR42861">
    <property type="entry name" value="CALCIUM-TRANSPORTING ATPASE"/>
    <property type="match status" value="1"/>
</dbReference>
<dbReference type="Pfam" id="PF13246">
    <property type="entry name" value="Cation_ATPase"/>
    <property type="match status" value="1"/>
</dbReference>
<dbReference type="Pfam" id="PF00689">
    <property type="entry name" value="Cation_ATPase_C"/>
    <property type="match status" value="1"/>
</dbReference>
<dbReference type="Pfam" id="PF00690">
    <property type="entry name" value="Cation_ATPase_N"/>
    <property type="match status" value="1"/>
</dbReference>
<dbReference type="Pfam" id="PF00122">
    <property type="entry name" value="E1-E2_ATPase"/>
    <property type="match status" value="1"/>
</dbReference>
<dbReference type="Pfam" id="PF00702">
    <property type="entry name" value="Hydrolase"/>
    <property type="match status" value="1"/>
</dbReference>
<dbReference type="PRINTS" id="PR00119">
    <property type="entry name" value="CATATPASE"/>
</dbReference>
<dbReference type="PRINTS" id="PR00120">
    <property type="entry name" value="HATPASE"/>
</dbReference>
<dbReference type="SFLD" id="SFLDS00003">
    <property type="entry name" value="Haloacid_Dehalogenase"/>
    <property type="match status" value="1"/>
</dbReference>
<dbReference type="SFLD" id="SFLDF00027">
    <property type="entry name" value="p-type_atpase"/>
    <property type="match status" value="1"/>
</dbReference>
<dbReference type="SMART" id="SM00831">
    <property type="entry name" value="Cation_ATPase_N"/>
    <property type="match status" value="1"/>
</dbReference>
<dbReference type="SUPFAM" id="SSF81653">
    <property type="entry name" value="Calcium ATPase, transduction domain A"/>
    <property type="match status" value="1"/>
</dbReference>
<dbReference type="SUPFAM" id="SSF81665">
    <property type="entry name" value="Calcium ATPase, transmembrane domain M"/>
    <property type="match status" value="1"/>
</dbReference>
<dbReference type="SUPFAM" id="SSF56784">
    <property type="entry name" value="HAD-like"/>
    <property type="match status" value="1"/>
</dbReference>
<dbReference type="SUPFAM" id="SSF81660">
    <property type="entry name" value="Metal cation-transporting ATPase, ATP-binding domain N"/>
    <property type="match status" value="1"/>
</dbReference>
<dbReference type="PROSITE" id="PS00154">
    <property type="entry name" value="ATPASE_E1_E2"/>
    <property type="match status" value="1"/>
</dbReference>
<proteinExistence type="evidence at protein level"/>
<organism>
    <name type="scientific">Schizosaccharomyces pombe (strain 972 / ATCC 24843)</name>
    <name type="common">Fission yeast</name>
    <dbReference type="NCBI Taxonomy" id="284812"/>
    <lineage>
        <taxon>Eukaryota</taxon>
        <taxon>Fungi</taxon>
        <taxon>Dikarya</taxon>
        <taxon>Ascomycota</taxon>
        <taxon>Taphrinomycotina</taxon>
        <taxon>Schizosaccharomycetes</taxon>
        <taxon>Schizosaccharomycetales</taxon>
        <taxon>Schizosaccharomycetaceae</taxon>
        <taxon>Schizosaccharomyces</taxon>
    </lineage>
</organism>
<keyword id="KW-0067">ATP-binding</keyword>
<keyword id="KW-0106">Calcium</keyword>
<keyword id="KW-0109">Calcium transport</keyword>
<keyword id="KW-0256">Endoplasmic reticulum</keyword>
<keyword id="KW-0406">Ion transport</keyword>
<keyword id="KW-0464">Manganese</keyword>
<keyword id="KW-0472">Membrane</keyword>
<keyword id="KW-0547">Nucleotide-binding</keyword>
<keyword id="KW-0597">Phosphoprotein</keyword>
<keyword id="KW-1185">Reference proteome</keyword>
<keyword id="KW-1278">Translocase</keyword>
<keyword id="KW-0812">Transmembrane</keyword>
<keyword id="KW-1133">Transmembrane helix</keyword>
<keyword id="KW-0813">Transport</keyword>